<organism>
    <name type="scientific">Rattus norvegicus</name>
    <name type="common">Rat</name>
    <dbReference type="NCBI Taxonomy" id="10116"/>
    <lineage>
        <taxon>Eukaryota</taxon>
        <taxon>Metazoa</taxon>
        <taxon>Chordata</taxon>
        <taxon>Craniata</taxon>
        <taxon>Vertebrata</taxon>
        <taxon>Euteleostomi</taxon>
        <taxon>Mammalia</taxon>
        <taxon>Eutheria</taxon>
        <taxon>Euarchontoglires</taxon>
        <taxon>Glires</taxon>
        <taxon>Rodentia</taxon>
        <taxon>Myomorpha</taxon>
        <taxon>Muroidea</taxon>
        <taxon>Muridae</taxon>
        <taxon>Murinae</taxon>
        <taxon>Rattus</taxon>
    </lineage>
</organism>
<feature type="chain" id="PRO_0000311342" description="Leiomodin-2">
    <location>
        <begin position="1"/>
        <end position="549"/>
    </location>
</feature>
<feature type="domain" description="WH2">
    <location>
        <begin position="523"/>
        <end position="542"/>
    </location>
</feature>
<feature type="region of interest" description="Interaction with actin 1" evidence="3">
    <location>
        <begin position="1"/>
        <end position="164"/>
    </location>
</feature>
<feature type="region of interest" description="Interaction with tropomyosin alpha" evidence="3">
    <location>
        <begin position="1"/>
        <end position="47"/>
    </location>
</feature>
<feature type="region of interest" description="Tropomyosin-binding" evidence="1">
    <location>
        <begin position="1"/>
        <end position="42"/>
    </location>
</feature>
<feature type="region of interest" description="Disordered" evidence="5">
    <location>
        <begin position="91"/>
        <end position="166"/>
    </location>
</feature>
<feature type="region of interest" description="Interaction with actin 2" evidence="3">
    <location>
        <begin position="165"/>
        <end position="499"/>
    </location>
</feature>
<feature type="region of interest" description="Disordered" evidence="5">
    <location>
        <begin position="179"/>
        <end position="200"/>
    </location>
</feature>
<feature type="region of interest" description="Disordered" evidence="5">
    <location>
        <begin position="358"/>
        <end position="455"/>
    </location>
</feature>
<feature type="region of interest" description="Disordered" evidence="5">
    <location>
        <begin position="469"/>
        <end position="534"/>
    </location>
</feature>
<feature type="region of interest" description="Interaction with actin 3" evidence="3">
    <location>
        <begin position="523"/>
        <end position="542"/>
    </location>
</feature>
<feature type="coiled-coil region" evidence="4">
    <location>
        <begin position="457"/>
        <end position="515"/>
    </location>
</feature>
<feature type="compositionally biased region" description="Acidic residues" evidence="5">
    <location>
        <begin position="95"/>
        <end position="105"/>
    </location>
</feature>
<feature type="compositionally biased region" description="Acidic residues" evidence="5">
    <location>
        <begin position="113"/>
        <end position="143"/>
    </location>
</feature>
<feature type="compositionally biased region" description="Polar residues" evidence="5">
    <location>
        <begin position="150"/>
        <end position="163"/>
    </location>
</feature>
<feature type="compositionally biased region" description="Polar residues" evidence="5">
    <location>
        <begin position="179"/>
        <end position="192"/>
    </location>
</feature>
<feature type="compositionally biased region" description="Basic and acidic residues" evidence="5">
    <location>
        <begin position="358"/>
        <end position="376"/>
    </location>
</feature>
<feature type="compositionally biased region" description="Polar residues" evidence="5">
    <location>
        <begin position="390"/>
        <end position="401"/>
    </location>
</feature>
<feature type="compositionally biased region" description="Pro residues" evidence="5">
    <location>
        <begin position="420"/>
        <end position="452"/>
    </location>
</feature>
<feature type="compositionally biased region" description="Polar residues" evidence="5">
    <location>
        <begin position="469"/>
        <end position="478"/>
    </location>
</feature>
<feature type="compositionally biased region" description="Basic residues" evidence="5">
    <location>
        <begin position="479"/>
        <end position="489"/>
    </location>
</feature>
<feature type="compositionally biased region" description="Basic and acidic residues" evidence="5">
    <location>
        <begin position="496"/>
        <end position="514"/>
    </location>
</feature>
<feature type="modified residue" description="Phosphoserine" evidence="10">
    <location>
        <position position="11"/>
    </location>
</feature>
<feature type="modified residue" description="Phosphoserine" evidence="10">
    <location>
        <position position="15"/>
    </location>
</feature>
<feature type="modified residue" description="Phosphoserine" evidence="10">
    <location>
        <position position="24"/>
    </location>
</feature>
<feature type="modified residue" description="Phosphoserine" evidence="10">
    <location>
        <position position="406"/>
    </location>
</feature>
<comment type="function">
    <text evidence="3 6">Mediates nucleation of actin filaments and thereby promotes actin polymerization (PubMed:18403713). Plays a role in the regulation of actin filament length (By similarity). Required for normal sarcomere organization in the heart, and for normal heart function (PubMed:18403713).</text>
</comment>
<comment type="subunit">
    <text evidence="2 3">Can bind at least three actin monomers and thereby provides a nucleus for actin filament formation. Interacts (via N-terminus) with tropomyosin alpha (TPM1) (via N-terminus). May also interact with TPM2 (via N-terminus). Interacts with FLII (By similarity).</text>
</comment>
<comment type="subcellular location">
    <subcellularLocation>
        <location evidence="6 7">Cytoplasm</location>
        <location evidence="6 7">Myofibril</location>
        <location evidence="6 7">Sarcomere</location>
    </subcellularLocation>
    <subcellularLocation>
        <location evidence="7">Cytoplasm</location>
        <location evidence="7">Myofibril</location>
    </subcellularLocation>
    <subcellularLocation>
        <location evidence="6">Cytoplasm</location>
        <location evidence="6">Myofibril</location>
        <location evidence="6">Sarcomere</location>
        <location evidence="6">M line</location>
    </subcellularLocation>
    <subcellularLocation>
        <location evidence="6">Cytoplasm</location>
        <location evidence="6">Cytoskeleton</location>
    </subcellularLocation>
    <text evidence="6">Colocalizes with actin filaments in sarcomeres. Detected close to the M line.</text>
</comment>
<comment type="similarity">
    <text evidence="9">Belongs to the tropomodulin family.</text>
</comment>
<reference key="1">
    <citation type="journal article" date="2004" name="Genome Res.">
        <title>The status, quality, and expansion of the NIH full-length cDNA project: the Mammalian Gene Collection (MGC).</title>
        <authorList>
            <consortium name="The MGC Project Team"/>
        </authorList>
    </citation>
    <scope>NUCLEOTIDE SEQUENCE [LARGE SCALE MRNA]</scope>
    <source>
        <tissue>Heart</tissue>
    </source>
</reference>
<reference key="2">
    <citation type="journal article" date="2008" name="Science">
        <title>Leiomodin is an actin filament nucleator in muscle cells.</title>
        <authorList>
            <person name="Chereau D."/>
            <person name="Boczkowska M."/>
            <person name="Skwarek-Maruszewska A."/>
            <person name="Fujiwara I."/>
            <person name="Hayes D.B."/>
            <person name="Rebowski G."/>
            <person name="Lappalainen P."/>
            <person name="Pollard T.D."/>
            <person name="Dominguez R."/>
        </authorList>
    </citation>
    <scope>FUNCTION</scope>
    <scope>SUBCELLULAR LOCATION</scope>
</reference>
<reference key="3">
    <citation type="journal article" date="2010" name="Mol. Biol. Cell">
        <title>Different localizations and cellular behaviors of leiomodin and tropomodulin in mature cardiomyocyte sarcomeres.</title>
        <authorList>
            <person name="Skwarek-Maruszewska A."/>
            <person name="Boczkowska M."/>
            <person name="Zajac A.L."/>
            <person name="Kremneva E."/>
            <person name="Svitkina T."/>
            <person name="Dominguez R."/>
            <person name="Lappalainen P."/>
        </authorList>
    </citation>
    <scope>SUBCELLULAR LOCATION</scope>
</reference>
<reference key="4">
    <citation type="journal article" date="2012" name="Nat. Commun.">
        <title>Quantitative maps of protein phosphorylation sites across 14 different rat organs and tissues.</title>
        <authorList>
            <person name="Lundby A."/>
            <person name="Secher A."/>
            <person name="Lage K."/>
            <person name="Nordsborg N.B."/>
            <person name="Dmytriyev A."/>
            <person name="Lundby C."/>
            <person name="Olsen J.V."/>
        </authorList>
    </citation>
    <scope>PHOSPHORYLATION [LARGE SCALE ANALYSIS] AT SER-11; SER-15; SER-24 AND SER-406</scope>
    <scope>IDENTIFICATION BY MASS SPECTROMETRY [LARGE SCALE ANALYSIS]</scope>
</reference>
<protein>
    <recommendedName>
        <fullName>Leiomodin-2</fullName>
    </recommendedName>
    <alternativeName>
        <fullName>Cardiac leiomodin</fullName>
        <shortName>C-LMOD</shortName>
    </alternativeName>
    <alternativeName>
        <fullName evidence="8">Leiomodin</fullName>
    </alternativeName>
</protein>
<accession>A1A5Q0</accession>
<sequence>MSTFGYRRGLSKYESIDEDELLASLTAEELKELERELEDIEPDRNLPVGLRQKSLTEKTPTGNFSREALMAYWEKESQKLLEKERLGECGKLAEEDKEESEEELIFTESNSEVSEEVCTEEEEESTEEEEEEEEEDSEEEEVTTEVTKHINGTVSHNGVNPDNSKPKTFKSQIENINLTNGNSGGTQRNTESPAAIHPCGNPTVIEDALEKIKNNDPDTTEVNLNNIENITTQTLSRFAEALKENTVVKTFSLANTHADDAAAIAIAEMLKVNEHITSVNVESNFITGKGILAIMRALQHNTVLTELRFHNQRHIMGSQVEMEIVKLLKENTTLLRLGYHFELPGPRMSMTSILTRNMDKQRQKRMQEQKQQEGHDGGATLRTKVWQRGTPGSSPYASPRQSPWSSPKVSKKVHTGRSRPPSPVAPPPPPPPPPLPPHMLPPPPPPPAPPLPGKKLITRNIAEVIKQQESAQRALQNGQRKKKGKKVKKQPNNILKEIKNSLRSVQEKKMEESSRPSTPQRSAHENLMEAIRGSSIRQLRRVEVPEALR</sequence>
<proteinExistence type="evidence at protein level"/>
<keyword id="KW-0009">Actin-binding</keyword>
<keyword id="KW-0175">Coiled coil</keyword>
<keyword id="KW-0963">Cytoplasm</keyword>
<keyword id="KW-0206">Cytoskeleton</keyword>
<keyword id="KW-0597">Phosphoprotein</keyword>
<keyword id="KW-1185">Reference proteome</keyword>
<evidence type="ECO:0000250" key="1"/>
<evidence type="ECO:0000250" key="2">
    <source>
        <dbReference type="UniProtKB" id="Q3UHZ5"/>
    </source>
</evidence>
<evidence type="ECO:0000250" key="3">
    <source>
        <dbReference type="UniProtKB" id="Q6P5Q4"/>
    </source>
</evidence>
<evidence type="ECO:0000255" key="4"/>
<evidence type="ECO:0000256" key="5">
    <source>
        <dbReference type="SAM" id="MobiDB-lite"/>
    </source>
</evidence>
<evidence type="ECO:0000269" key="6">
    <source>
    </source>
</evidence>
<evidence type="ECO:0000269" key="7">
    <source>
    </source>
</evidence>
<evidence type="ECO:0000303" key="8">
    <source>
    </source>
</evidence>
<evidence type="ECO:0000305" key="9"/>
<evidence type="ECO:0007744" key="10">
    <source>
    </source>
</evidence>
<gene>
    <name type="primary">Lmod2</name>
</gene>
<name>LMOD2_RAT</name>
<dbReference type="EMBL" id="BC128755">
    <property type="protein sequence ID" value="AAI28756.1"/>
    <property type="molecule type" value="mRNA"/>
</dbReference>
<dbReference type="RefSeq" id="NP_001094434.1">
    <property type="nucleotide sequence ID" value="NM_001100964.1"/>
</dbReference>
<dbReference type="SMR" id="A1A5Q0"/>
<dbReference type="BioGRID" id="255509">
    <property type="interactions" value="1"/>
</dbReference>
<dbReference type="FunCoup" id="A1A5Q0">
    <property type="interactions" value="19"/>
</dbReference>
<dbReference type="STRING" id="10116.ENSRNOP00000067847"/>
<dbReference type="iPTMnet" id="A1A5Q0"/>
<dbReference type="PhosphoSitePlus" id="A1A5Q0"/>
<dbReference type="PaxDb" id="10116-ENSRNOP00000064921"/>
<dbReference type="PeptideAtlas" id="A1A5Q0"/>
<dbReference type="GeneID" id="296935"/>
<dbReference type="KEGG" id="rno:296935"/>
<dbReference type="AGR" id="RGD:1592092"/>
<dbReference type="CTD" id="442721"/>
<dbReference type="RGD" id="1592092">
    <property type="gene designation" value="Lmod2"/>
</dbReference>
<dbReference type="eggNOG" id="KOG3735">
    <property type="taxonomic scope" value="Eukaryota"/>
</dbReference>
<dbReference type="InParanoid" id="A1A5Q0"/>
<dbReference type="OrthoDB" id="87781at9989"/>
<dbReference type="PhylomeDB" id="A1A5Q0"/>
<dbReference type="PRO" id="PR:A1A5Q0"/>
<dbReference type="Proteomes" id="UP000002494">
    <property type="component" value="Unplaced"/>
</dbReference>
<dbReference type="GO" id="GO:0005884">
    <property type="term" value="C:actin filament"/>
    <property type="evidence" value="ECO:0000250"/>
    <property type="project" value="UniProtKB"/>
</dbReference>
<dbReference type="GO" id="GO:0097512">
    <property type="term" value="C:cardiac myofibril"/>
    <property type="evidence" value="ECO:0000314"/>
    <property type="project" value="UniProtKB"/>
</dbReference>
<dbReference type="GO" id="GO:0005856">
    <property type="term" value="C:cytoskeleton"/>
    <property type="evidence" value="ECO:0000318"/>
    <property type="project" value="GO_Central"/>
</dbReference>
<dbReference type="GO" id="GO:0031430">
    <property type="term" value="C:M band"/>
    <property type="evidence" value="ECO:0000266"/>
    <property type="project" value="RGD"/>
</dbReference>
<dbReference type="GO" id="GO:0030016">
    <property type="term" value="C:myofibril"/>
    <property type="evidence" value="ECO:0000266"/>
    <property type="project" value="RGD"/>
</dbReference>
<dbReference type="GO" id="GO:0030017">
    <property type="term" value="C:sarcomere"/>
    <property type="evidence" value="ECO:0000314"/>
    <property type="project" value="UniProtKB"/>
</dbReference>
<dbReference type="GO" id="GO:0005865">
    <property type="term" value="C:striated muscle thin filament"/>
    <property type="evidence" value="ECO:0000318"/>
    <property type="project" value="GO_Central"/>
</dbReference>
<dbReference type="GO" id="GO:0003779">
    <property type="term" value="F:actin binding"/>
    <property type="evidence" value="ECO:0000250"/>
    <property type="project" value="UniProtKB"/>
</dbReference>
<dbReference type="GO" id="GO:0003785">
    <property type="term" value="F:actin monomer binding"/>
    <property type="evidence" value="ECO:0000266"/>
    <property type="project" value="RGD"/>
</dbReference>
<dbReference type="GO" id="GO:0005523">
    <property type="term" value="F:tropomyosin binding"/>
    <property type="evidence" value="ECO:0000266"/>
    <property type="project" value="RGD"/>
</dbReference>
<dbReference type="GO" id="GO:0007015">
    <property type="term" value="P:actin filament organization"/>
    <property type="evidence" value="ECO:0000318"/>
    <property type="project" value="GO_Central"/>
</dbReference>
<dbReference type="GO" id="GO:0030041">
    <property type="term" value="P:actin filament polymerization"/>
    <property type="evidence" value="ECO:0000266"/>
    <property type="project" value="RGD"/>
</dbReference>
<dbReference type="GO" id="GO:0045010">
    <property type="term" value="P:actin nucleation"/>
    <property type="evidence" value="ECO:0000250"/>
    <property type="project" value="UniProtKB"/>
</dbReference>
<dbReference type="GO" id="GO:0006936">
    <property type="term" value="P:muscle contraction"/>
    <property type="evidence" value="ECO:0000318"/>
    <property type="project" value="GO_Central"/>
</dbReference>
<dbReference type="GO" id="GO:0030239">
    <property type="term" value="P:myofibril assembly"/>
    <property type="evidence" value="ECO:0000318"/>
    <property type="project" value="GO_Central"/>
</dbReference>
<dbReference type="GO" id="GO:0051694">
    <property type="term" value="P:pointed-end actin filament capping"/>
    <property type="evidence" value="ECO:0007669"/>
    <property type="project" value="InterPro"/>
</dbReference>
<dbReference type="GO" id="GO:0030838">
    <property type="term" value="P:positive regulation of actin filament polymerization"/>
    <property type="evidence" value="ECO:0000250"/>
    <property type="project" value="UniProtKB"/>
</dbReference>
<dbReference type="GO" id="GO:0045214">
    <property type="term" value="P:sarcomere organization"/>
    <property type="evidence" value="ECO:0000315"/>
    <property type="project" value="UniProtKB"/>
</dbReference>
<dbReference type="FunFam" id="3.80.10.10:FF:000132">
    <property type="entry name" value="Leiomodin 2"/>
    <property type="match status" value="1"/>
</dbReference>
<dbReference type="Gene3D" id="3.80.10.10">
    <property type="entry name" value="Ribonuclease Inhibitor"/>
    <property type="match status" value="2"/>
</dbReference>
<dbReference type="InterPro" id="IPR032675">
    <property type="entry name" value="LRR_dom_sf"/>
</dbReference>
<dbReference type="InterPro" id="IPR004934">
    <property type="entry name" value="TMOD"/>
</dbReference>
<dbReference type="PANTHER" id="PTHR10901:SF12">
    <property type="entry name" value="LEIOMODIN-2"/>
    <property type="match status" value="1"/>
</dbReference>
<dbReference type="PANTHER" id="PTHR10901">
    <property type="entry name" value="TROPOMODULIN"/>
    <property type="match status" value="1"/>
</dbReference>
<dbReference type="Pfam" id="PF03250">
    <property type="entry name" value="Tropomodulin"/>
    <property type="match status" value="1"/>
</dbReference>
<dbReference type="SUPFAM" id="SSF52047">
    <property type="entry name" value="RNI-like"/>
    <property type="match status" value="1"/>
</dbReference>